<reference key="1">
    <citation type="journal article" date="2014" name="Appl. Environ. Microbiol.">
        <title>Novel three-component Rieske non-heme iron oxygenase system catalyzing the N-dealkylation of chloroacetanilide herbicides in sphingomonads DC-6 and DC-2.</title>
        <authorList>
            <person name="Chen Q."/>
            <person name="Wang C.H."/>
            <person name="Deng S.K."/>
            <person name="Wu Y.D."/>
            <person name="Li Y."/>
            <person name="Yao L."/>
            <person name="Jiang J.D."/>
            <person name="Yan X."/>
            <person name="He J."/>
            <person name="Li S.P."/>
        </authorList>
    </citation>
    <scope>NUCLEOTIDE SEQUENCE [LARGE SCALE GENOMIC DNA]</scope>
    <scope>FUNCTION</scope>
    <scope>CATALYTIC ACTIVITY</scope>
    <scope>SUBUNIT</scope>
    <source>
        <strain>DC-6 / KACC 16600</strain>
    </source>
</reference>
<reference key="2">
    <citation type="submission" date="2017-05" db="EMBL/GenBank/DDBJ databases">
        <title>Comparative genome analysis reveals the molecular basis of chloroacetanilide herbicide mineralization in Sphingomonas wittichii DC-6.</title>
        <authorList>
            <person name="Cheng M."/>
            <person name="Chen Q."/>
            <person name="Qiu J."/>
            <person name="Yan X."/>
            <person name="He J."/>
        </authorList>
    </citation>
    <scope>NUCLEOTIDE SEQUENCE [GENOMIC DNA]</scope>
    <source>
        <strain>DC-6 / KACC 16600</strain>
    </source>
</reference>
<comment type="function">
    <text evidence="2">Component of the chloroacetanilide N-alkylformylase multicomponent enzyme system involved in the degradation of chloroacetanilide herbicides (N-alkoxyalkyl-N-chloroacetyl-substituted aniline derivatives). In vitro, catalyzes the transfers of electrons from ferredoxin (CndB1) to NADH. N-dealkylase utilizes NADH, but not NADPH, as the electron donor.</text>
</comment>
<comment type="catalytic activity">
    <reaction evidence="5">
        <text>2 reduced [2Fe-2S]-[ferredoxin] + NAD(+) + H(+) = 2 oxidized [2Fe-2S]-[ferredoxin] + NADH</text>
        <dbReference type="Rhea" id="RHEA:16521"/>
        <dbReference type="Rhea" id="RHEA-COMP:10000"/>
        <dbReference type="Rhea" id="RHEA-COMP:10001"/>
        <dbReference type="ChEBI" id="CHEBI:15378"/>
        <dbReference type="ChEBI" id="CHEBI:33737"/>
        <dbReference type="ChEBI" id="CHEBI:33738"/>
        <dbReference type="ChEBI" id="CHEBI:57540"/>
        <dbReference type="ChEBI" id="CHEBI:57945"/>
        <dbReference type="EC" id="1.18.1.3"/>
    </reaction>
</comment>
<comment type="cofactor">
    <cofactor evidence="1">
        <name>FAD</name>
        <dbReference type="ChEBI" id="CHEBI:57692"/>
    </cofactor>
</comment>
<comment type="subunit">
    <text evidence="2">The chloroacetanilide N-alkylformylase multicomponent enzyme system is composed of an oxygenase component (CndA) and an electron transfer component formed by a ferredoxin reductase (CndC1) and a ferredoxin (CndB1). In vitro, chloroacetanilide N-alkylformylase assays in which CndB1 is substituted for CndB2 demonstrate that the two enzymes possess nearly identical activities.</text>
</comment>
<comment type="similarity">
    <text evidence="4">Belongs to the FAD-dependent oxidoreductase family.</text>
</comment>
<keyword id="KW-0274">FAD</keyword>
<keyword id="KW-0285">Flavoprotein</keyword>
<keyword id="KW-0520">NAD</keyword>
<keyword id="KW-0560">Oxidoreductase</keyword>
<sequence length="410" mass="43440">MAQYDVLIVGAGHGGAQAAVALRQNKFEGTIAIVGDEPELPYERPPLSKEYFSGEKSFDRILIRPATFWAERNVDMLLGKRVASVDPAGHSVTLTDGSTIGYGKLVWATGGAPRKLACSGHHLSGVHGVRTREDADRMLGEMERTTSVVVIGGGYIGLEAAAVLSKAGKKVTVLEALDRVLARVAGEALSRFYEAEHRAHGVDVQLGAKVDCIVGDDQDRVTGVQMHDGSVIPADMVIVGIGIIPAVEPLIAAGAAGGNGVDVDEYCRTSLPDIYAIGDCAMHANAFAEGARIRLESVQNANDQATTAAKHILGGTDAYHAVPWFWSNQYDLRLQTMGLSIGYDETIVRGDPANRSFSVVYLKNGRVLALDCVNAVKDYVQGKALVTGGVSPDKASLANPEIPLKTLLPA</sequence>
<name>CNDC1_RHIWD</name>
<protein>
    <recommendedName>
        <fullName evidence="3">Chloroacetanilide N-alkylformylase, ferredoxin reductase component</fullName>
    </recommendedName>
    <alternativeName>
        <fullName evidence="5">Ferredoxin--NAD(+) reductase</fullName>
        <ecNumber evidence="5">1.18.1.3</ecNumber>
    </alternativeName>
</protein>
<dbReference type="EC" id="1.18.1.3" evidence="5"/>
<dbReference type="EMBL" id="KJ020540">
    <property type="protein sequence ID" value="AHW42445.1"/>
    <property type="molecule type" value="Genomic_DNA"/>
</dbReference>
<dbReference type="EMBL" id="CP021181">
    <property type="protein sequence ID" value="ARR54690.1"/>
    <property type="molecule type" value="Genomic_DNA"/>
</dbReference>
<dbReference type="SMR" id="X5CY81"/>
<dbReference type="KEGG" id="sphd:HY78_15240"/>
<dbReference type="GO" id="GO:0005737">
    <property type="term" value="C:cytoplasm"/>
    <property type="evidence" value="ECO:0007669"/>
    <property type="project" value="TreeGrafter"/>
</dbReference>
<dbReference type="GO" id="GO:0008860">
    <property type="term" value="F:ferredoxin-NAD+ reductase activity"/>
    <property type="evidence" value="ECO:0000314"/>
    <property type="project" value="UniProtKB"/>
</dbReference>
<dbReference type="GO" id="GO:0050660">
    <property type="term" value="F:flavin adenine dinucleotide binding"/>
    <property type="evidence" value="ECO:0000250"/>
    <property type="project" value="UniProtKB"/>
</dbReference>
<dbReference type="GO" id="GO:0016651">
    <property type="term" value="F:oxidoreductase activity, acting on NAD(P)H"/>
    <property type="evidence" value="ECO:0007669"/>
    <property type="project" value="TreeGrafter"/>
</dbReference>
<dbReference type="FunFam" id="3.30.390.30:FF:000016">
    <property type="entry name" value="Putidaredoxin reductase CamA"/>
    <property type="match status" value="1"/>
</dbReference>
<dbReference type="Gene3D" id="3.30.390.30">
    <property type="match status" value="1"/>
</dbReference>
<dbReference type="Gene3D" id="3.50.50.60">
    <property type="entry name" value="FAD/NAD(P)-binding domain"/>
    <property type="match status" value="2"/>
</dbReference>
<dbReference type="InterPro" id="IPR050446">
    <property type="entry name" value="FAD-oxidoreductase/Apoptosis"/>
</dbReference>
<dbReference type="InterPro" id="IPR036188">
    <property type="entry name" value="FAD/NAD-bd_sf"/>
</dbReference>
<dbReference type="InterPro" id="IPR023753">
    <property type="entry name" value="FAD/NAD-binding_dom"/>
</dbReference>
<dbReference type="InterPro" id="IPR016156">
    <property type="entry name" value="FAD/NAD-linked_Rdtase_dimer_sf"/>
</dbReference>
<dbReference type="InterPro" id="IPR028202">
    <property type="entry name" value="Reductase_C"/>
</dbReference>
<dbReference type="PANTHER" id="PTHR43557">
    <property type="entry name" value="APOPTOSIS-INDUCING FACTOR 1"/>
    <property type="match status" value="1"/>
</dbReference>
<dbReference type="PANTHER" id="PTHR43557:SF2">
    <property type="entry name" value="RIESKE DOMAIN-CONTAINING PROTEIN-RELATED"/>
    <property type="match status" value="1"/>
</dbReference>
<dbReference type="Pfam" id="PF07992">
    <property type="entry name" value="Pyr_redox_2"/>
    <property type="match status" value="1"/>
</dbReference>
<dbReference type="Pfam" id="PF14759">
    <property type="entry name" value="Reductase_C"/>
    <property type="match status" value="1"/>
</dbReference>
<dbReference type="PRINTS" id="PR00368">
    <property type="entry name" value="FADPNR"/>
</dbReference>
<dbReference type="PRINTS" id="PR00411">
    <property type="entry name" value="PNDRDTASEI"/>
</dbReference>
<dbReference type="SUPFAM" id="SSF51905">
    <property type="entry name" value="FAD/NAD(P)-binding domain"/>
    <property type="match status" value="2"/>
</dbReference>
<dbReference type="SUPFAM" id="SSF55424">
    <property type="entry name" value="FAD/NAD-linked reductases, dimerisation (C-terminal) domain"/>
    <property type="match status" value="1"/>
</dbReference>
<accession>X5CY81</accession>
<organism>
    <name type="scientific">Rhizorhabdus wittichii (strain DC-6 / KACC 16600)</name>
    <name type="common">Sphingomonas wittichii</name>
    <dbReference type="NCBI Taxonomy" id="1283312"/>
    <lineage>
        <taxon>Bacteria</taxon>
        <taxon>Pseudomonadati</taxon>
        <taxon>Pseudomonadota</taxon>
        <taxon>Alphaproteobacteria</taxon>
        <taxon>Sphingomonadales</taxon>
        <taxon>Sphingomonadaceae</taxon>
        <taxon>Rhizorhabdus</taxon>
    </lineage>
</organism>
<gene>
    <name evidence="3" type="primary">cndC1</name>
    <name evidence="6" type="ORF">HY78_15240</name>
</gene>
<evidence type="ECO:0000250" key="1">
    <source>
        <dbReference type="UniProtKB" id="P16640"/>
    </source>
</evidence>
<evidence type="ECO:0000269" key="2">
    <source>
    </source>
</evidence>
<evidence type="ECO:0000303" key="3">
    <source>
    </source>
</evidence>
<evidence type="ECO:0000305" key="4"/>
<evidence type="ECO:0000305" key="5">
    <source>
    </source>
</evidence>
<evidence type="ECO:0000312" key="6">
    <source>
        <dbReference type="EMBL" id="ARR54690.1"/>
    </source>
</evidence>
<feature type="chain" id="PRO_0000445250" description="Chloroacetanilide N-alkylformylase, ferredoxin reductase component">
    <location>
        <begin position="1"/>
        <end position="410"/>
    </location>
</feature>
<feature type="binding site" evidence="1">
    <location>
        <position position="14"/>
    </location>
    <ligand>
        <name>FAD</name>
        <dbReference type="ChEBI" id="CHEBI:57692"/>
    </ligand>
</feature>
<feature type="binding site" evidence="1">
    <location>
        <position position="36"/>
    </location>
    <ligand>
        <name>FAD</name>
        <dbReference type="ChEBI" id="CHEBI:57692"/>
    </ligand>
</feature>
<feature type="binding site" evidence="1">
    <location>
        <position position="49"/>
    </location>
    <ligand>
        <name>FAD</name>
        <dbReference type="ChEBI" id="CHEBI:57692"/>
    </ligand>
</feature>
<feature type="binding site" evidence="1">
    <location>
        <position position="82"/>
    </location>
    <ligand>
        <name>FAD</name>
        <dbReference type="ChEBI" id="CHEBI:57692"/>
    </ligand>
</feature>
<feature type="binding site" evidence="1">
    <location>
        <position position="130"/>
    </location>
    <ligand>
        <name>FAD</name>
        <dbReference type="ChEBI" id="CHEBI:57692"/>
    </ligand>
</feature>
<feature type="binding site" evidence="1">
    <location>
        <position position="279"/>
    </location>
    <ligand>
        <name>FAD</name>
        <dbReference type="ChEBI" id="CHEBI:57692"/>
    </ligand>
</feature>
<feature type="binding site" evidence="1">
    <location>
        <position position="298"/>
    </location>
    <ligand>
        <name>FAD</name>
        <dbReference type="ChEBI" id="CHEBI:57692"/>
    </ligand>
</feature>
<proteinExistence type="evidence at protein level"/>